<keyword id="KW-0963">Cytoplasm</keyword>
<keyword id="KW-1185">Reference proteome</keyword>
<keyword id="KW-0694">RNA-binding</keyword>
<keyword id="KW-0808">Transferase</keyword>
<keyword id="KW-0819">tRNA processing</keyword>
<keyword id="KW-0820">tRNA-binding</keyword>
<gene>
    <name evidence="1" type="primary">NCS6</name>
    <name evidence="1" type="synonym">CTU1</name>
    <name type="ordered locus">DEHA2G02728g</name>
</gene>
<name>CTU1_DEBHA</name>
<reference key="1">
    <citation type="journal article" date="2004" name="Nature">
        <title>Genome evolution in yeasts.</title>
        <authorList>
            <person name="Dujon B."/>
            <person name="Sherman D."/>
            <person name="Fischer G."/>
            <person name="Durrens P."/>
            <person name="Casaregola S."/>
            <person name="Lafontaine I."/>
            <person name="de Montigny J."/>
            <person name="Marck C."/>
            <person name="Neuveglise C."/>
            <person name="Talla E."/>
            <person name="Goffard N."/>
            <person name="Frangeul L."/>
            <person name="Aigle M."/>
            <person name="Anthouard V."/>
            <person name="Babour A."/>
            <person name="Barbe V."/>
            <person name="Barnay S."/>
            <person name="Blanchin S."/>
            <person name="Beckerich J.-M."/>
            <person name="Beyne E."/>
            <person name="Bleykasten C."/>
            <person name="Boisrame A."/>
            <person name="Boyer J."/>
            <person name="Cattolico L."/>
            <person name="Confanioleri F."/>
            <person name="de Daruvar A."/>
            <person name="Despons L."/>
            <person name="Fabre E."/>
            <person name="Fairhead C."/>
            <person name="Ferry-Dumazet H."/>
            <person name="Groppi A."/>
            <person name="Hantraye F."/>
            <person name="Hennequin C."/>
            <person name="Jauniaux N."/>
            <person name="Joyet P."/>
            <person name="Kachouri R."/>
            <person name="Kerrest A."/>
            <person name="Koszul R."/>
            <person name="Lemaire M."/>
            <person name="Lesur I."/>
            <person name="Ma L."/>
            <person name="Muller H."/>
            <person name="Nicaud J.-M."/>
            <person name="Nikolski M."/>
            <person name="Oztas S."/>
            <person name="Ozier-Kalogeropoulos O."/>
            <person name="Pellenz S."/>
            <person name="Potier S."/>
            <person name="Richard G.-F."/>
            <person name="Straub M.-L."/>
            <person name="Suleau A."/>
            <person name="Swennen D."/>
            <person name="Tekaia F."/>
            <person name="Wesolowski-Louvel M."/>
            <person name="Westhof E."/>
            <person name="Wirth B."/>
            <person name="Zeniou-Meyer M."/>
            <person name="Zivanovic Y."/>
            <person name="Bolotin-Fukuhara M."/>
            <person name="Thierry A."/>
            <person name="Bouchier C."/>
            <person name="Caudron B."/>
            <person name="Scarpelli C."/>
            <person name="Gaillardin C."/>
            <person name="Weissenbach J."/>
            <person name="Wincker P."/>
            <person name="Souciet J.-L."/>
        </authorList>
    </citation>
    <scope>NUCLEOTIDE SEQUENCE [LARGE SCALE GENOMIC DNA]</scope>
    <source>
        <strain>ATCC 36239 / CBS 767 / BCRC 21394 / JCM 1990 / NBRC 0083 / IGC 2968</strain>
    </source>
</reference>
<protein>
    <recommendedName>
        <fullName evidence="1">Cytoplasmic tRNA 2-thiolation protein 1</fullName>
        <ecNumber evidence="1">2.7.7.-</ecNumber>
    </recommendedName>
    <alternativeName>
        <fullName evidence="1">Cytoplasmic tRNA adenylyltransferase 1</fullName>
    </alternativeName>
</protein>
<sequence>MPEEKVATKKIKLSALCELCNGRKAVMKRPKNLQKLCKECFYNVFETEIHNTIADANLFQPGDKVAIGASGGKDSTVLASVLKTLNERYDYRLELVLLSIDEGIKGYRDDSLATVKRNQAQYNMALEIISYKDLYNWSMDEIVSCAGIRSSCTYCGVLRRQALDRGAAKLGINHVVTGHNADDMAETVLMNLLRGDTARLEKSCTILTQSTGSPIKRSKPFKYSYQKEIVLYAHYKKLDYFSTECSYAPEAFRGTARELLKSLEAIRPSCIMDIIYSGEHLALAPKKKRTQQYKNKKKTQVDNEHEINADGSITIGTREFKDGNRCENCGYLTSNKICKACVLLAGLEMNRAKVSVDNNTAVDGAAKLTKTLEQLSF</sequence>
<organism>
    <name type="scientific">Debaryomyces hansenii (strain ATCC 36239 / CBS 767 / BCRC 21394 / JCM 1990 / NBRC 0083 / IGC 2968)</name>
    <name type="common">Yeast</name>
    <name type="synonym">Torulaspora hansenii</name>
    <dbReference type="NCBI Taxonomy" id="284592"/>
    <lineage>
        <taxon>Eukaryota</taxon>
        <taxon>Fungi</taxon>
        <taxon>Dikarya</taxon>
        <taxon>Ascomycota</taxon>
        <taxon>Saccharomycotina</taxon>
        <taxon>Pichiomycetes</taxon>
        <taxon>Debaryomycetaceae</taxon>
        <taxon>Debaryomyces</taxon>
    </lineage>
</organism>
<comment type="function">
    <text evidence="1">Plays a central role in 2-thiolation of mcm(5)S(2)U at tRNA wobble positions of tRNA(Lys), tRNA(Glu) and tRNA(Gln). Directly binds tRNAs and probably acts by catalyzing adenylation of tRNAs, an intermediate required for 2-thiolation. It is unclear whether it acts as a sulfurtransferase that transfers sulfur from thiocarboxylated URM1 onto the uridine of tRNAs at wobble position. Prior mcm(5) tRNA modification by the elongator complex is required for 2-thiolation. May also be involved in protein urmylation.</text>
</comment>
<comment type="pathway">
    <text evidence="1">tRNA modification; 5-methoxycarbonylmethyl-2-thiouridine-tRNA biosynthesis.</text>
</comment>
<comment type="subcellular location">
    <subcellularLocation>
        <location evidence="1">Cytoplasm</location>
    </subcellularLocation>
</comment>
<comment type="similarity">
    <text evidence="1">Belongs to the TtcA family. CTU1/NCS6/ATPBD3 subfamily.</text>
</comment>
<feature type="chain" id="PRO_0000368261" description="Cytoplasmic tRNA 2-thiolation protein 1">
    <location>
        <begin position="1"/>
        <end position="377"/>
    </location>
</feature>
<evidence type="ECO:0000255" key="1">
    <source>
        <dbReference type="HAMAP-Rule" id="MF_03053"/>
    </source>
</evidence>
<accession>B5RV24</accession>
<proteinExistence type="inferred from homology"/>
<dbReference type="EC" id="2.7.7.-" evidence="1"/>
<dbReference type="EMBL" id="CR382139">
    <property type="protein sequence ID" value="CAR65903.1"/>
    <property type="molecule type" value="Genomic_DNA"/>
</dbReference>
<dbReference type="RefSeq" id="XP_002770568.1">
    <property type="nucleotide sequence ID" value="XM_002770522.1"/>
</dbReference>
<dbReference type="SMR" id="B5RV24"/>
<dbReference type="FunCoup" id="B5RV24">
    <property type="interactions" value="467"/>
</dbReference>
<dbReference type="STRING" id="284592.B5RV24"/>
<dbReference type="GeneID" id="8999114"/>
<dbReference type="KEGG" id="dha:DEHA2G02728g"/>
<dbReference type="VEuPathDB" id="FungiDB:DEHA2G02728g"/>
<dbReference type="eggNOG" id="KOG2840">
    <property type="taxonomic scope" value="Eukaryota"/>
</dbReference>
<dbReference type="HOGENOM" id="CLU_026481_1_2_1"/>
<dbReference type="InParanoid" id="B5RV24"/>
<dbReference type="OMA" id="KPVRGIC"/>
<dbReference type="OrthoDB" id="198857at2759"/>
<dbReference type="UniPathway" id="UPA00988"/>
<dbReference type="Proteomes" id="UP000000599">
    <property type="component" value="Chromosome G"/>
</dbReference>
<dbReference type="GO" id="GO:0005829">
    <property type="term" value="C:cytosol"/>
    <property type="evidence" value="ECO:0000250"/>
    <property type="project" value="UniProtKB"/>
</dbReference>
<dbReference type="GO" id="GO:0002144">
    <property type="term" value="C:cytosolic tRNA wobble base thiouridylase complex"/>
    <property type="evidence" value="ECO:0007669"/>
    <property type="project" value="EnsemblFungi"/>
</dbReference>
<dbReference type="GO" id="GO:0005739">
    <property type="term" value="C:mitochondrion"/>
    <property type="evidence" value="ECO:0007669"/>
    <property type="project" value="TreeGrafter"/>
</dbReference>
<dbReference type="GO" id="GO:0016779">
    <property type="term" value="F:nucleotidyltransferase activity"/>
    <property type="evidence" value="ECO:0007669"/>
    <property type="project" value="UniProtKB-UniRule"/>
</dbReference>
<dbReference type="GO" id="GO:0000049">
    <property type="term" value="F:tRNA binding"/>
    <property type="evidence" value="ECO:0000250"/>
    <property type="project" value="UniProtKB"/>
</dbReference>
<dbReference type="GO" id="GO:0103016">
    <property type="term" value="F:tRNA-uridine 2-sulfurtransferase activity"/>
    <property type="evidence" value="ECO:0007669"/>
    <property type="project" value="EnsemblFungi"/>
</dbReference>
<dbReference type="GO" id="GO:0032447">
    <property type="term" value="P:protein urmylation"/>
    <property type="evidence" value="ECO:0007669"/>
    <property type="project" value="UniProtKB-UniRule"/>
</dbReference>
<dbReference type="GO" id="GO:0034227">
    <property type="term" value="P:tRNA thio-modification"/>
    <property type="evidence" value="ECO:0000250"/>
    <property type="project" value="UniProtKB"/>
</dbReference>
<dbReference type="GO" id="GO:0002143">
    <property type="term" value="P:tRNA wobble position uridine thiolation"/>
    <property type="evidence" value="ECO:0007669"/>
    <property type="project" value="EnsemblFungi"/>
</dbReference>
<dbReference type="GO" id="GO:0002098">
    <property type="term" value="P:tRNA wobble uridine modification"/>
    <property type="evidence" value="ECO:0000250"/>
    <property type="project" value="UniProtKB"/>
</dbReference>
<dbReference type="CDD" id="cd01713">
    <property type="entry name" value="CTU1-like"/>
    <property type="match status" value="1"/>
</dbReference>
<dbReference type="FunFam" id="3.40.50.620:FF:000188">
    <property type="entry name" value="Cytoplasmic tRNA 2-thiolation protein 1"/>
    <property type="match status" value="1"/>
</dbReference>
<dbReference type="Gene3D" id="3.40.50.620">
    <property type="entry name" value="HUPs"/>
    <property type="match status" value="1"/>
</dbReference>
<dbReference type="HAMAP" id="MF_03053">
    <property type="entry name" value="CTU1"/>
    <property type="match status" value="1"/>
</dbReference>
<dbReference type="InterPro" id="IPR056369">
    <property type="entry name" value="CTU1-like_ATP-bd"/>
</dbReference>
<dbReference type="InterPro" id="IPR032442">
    <property type="entry name" value="CTU1_C"/>
</dbReference>
<dbReference type="InterPro" id="IPR000541">
    <property type="entry name" value="Ncs6/Tuc1/Ctu1"/>
</dbReference>
<dbReference type="InterPro" id="IPR014729">
    <property type="entry name" value="Rossmann-like_a/b/a_fold"/>
</dbReference>
<dbReference type="InterPro" id="IPR011063">
    <property type="entry name" value="TilS/TtcA_N"/>
</dbReference>
<dbReference type="InterPro" id="IPR035107">
    <property type="entry name" value="tRNA_thiolation_TtcA_Ctu1"/>
</dbReference>
<dbReference type="InterPro" id="IPR020554">
    <property type="entry name" value="UPF0021_CS"/>
</dbReference>
<dbReference type="PANTHER" id="PTHR11807">
    <property type="entry name" value="ATPASES OF THE PP SUPERFAMILY-RELATED"/>
    <property type="match status" value="1"/>
</dbReference>
<dbReference type="PANTHER" id="PTHR11807:SF12">
    <property type="entry name" value="CYTOPLASMIC TRNA 2-THIOLATION PROTEIN 1"/>
    <property type="match status" value="1"/>
</dbReference>
<dbReference type="Pfam" id="PF01171">
    <property type="entry name" value="ATP_bind_3"/>
    <property type="match status" value="1"/>
</dbReference>
<dbReference type="Pfam" id="PF16503">
    <property type="entry name" value="zn-ribbon_14"/>
    <property type="match status" value="1"/>
</dbReference>
<dbReference type="PIRSF" id="PIRSF004976">
    <property type="entry name" value="ATPase_YdaO"/>
    <property type="match status" value="1"/>
</dbReference>
<dbReference type="SUPFAM" id="SSF52402">
    <property type="entry name" value="Adenine nucleotide alpha hydrolases-like"/>
    <property type="match status" value="1"/>
</dbReference>
<dbReference type="PROSITE" id="PS01263">
    <property type="entry name" value="UPF0021"/>
    <property type="match status" value="1"/>
</dbReference>